<organism>
    <name type="scientific">Neisseria meningitidis serogroup A / serotype 4A (strain DSM 15465 / Z2491)</name>
    <dbReference type="NCBI Taxonomy" id="122587"/>
    <lineage>
        <taxon>Bacteria</taxon>
        <taxon>Pseudomonadati</taxon>
        <taxon>Pseudomonadota</taxon>
        <taxon>Betaproteobacteria</taxon>
        <taxon>Neisseriales</taxon>
        <taxon>Neisseriaceae</taxon>
        <taxon>Neisseria</taxon>
    </lineage>
</organism>
<protein>
    <recommendedName>
        <fullName evidence="1">Nucleoid-associated protein NMA1657</fullName>
    </recommendedName>
</protein>
<comment type="function">
    <text evidence="1">Binds to DNA and alters its conformation. May be involved in regulation of gene expression, nucleoid organization and DNA protection.</text>
</comment>
<comment type="subunit">
    <text evidence="1">Homodimer.</text>
</comment>
<comment type="subcellular location">
    <subcellularLocation>
        <location evidence="1">Cytoplasm</location>
        <location evidence="1">Nucleoid</location>
    </subcellularLocation>
</comment>
<comment type="similarity">
    <text evidence="1">Belongs to the YbaB/EbfC family.</text>
</comment>
<accession>Q9JTS0</accession>
<accession>A1ISN2</accession>
<dbReference type="EMBL" id="AL157959">
    <property type="protein sequence ID" value="CAM08791.1"/>
    <property type="molecule type" value="Genomic_DNA"/>
</dbReference>
<dbReference type="PIR" id="E81860">
    <property type="entry name" value="E81860"/>
</dbReference>
<dbReference type="RefSeq" id="WP_002213018.1">
    <property type="nucleotide sequence ID" value="NC_003116.1"/>
</dbReference>
<dbReference type="SMR" id="Q9JTS0"/>
<dbReference type="EnsemblBacteria" id="CAM08791">
    <property type="protein sequence ID" value="CAM08791"/>
    <property type="gene ID" value="NMA1657"/>
</dbReference>
<dbReference type="KEGG" id="nma:NMA1657"/>
<dbReference type="HOGENOM" id="CLU_140930_0_0_4"/>
<dbReference type="Proteomes" id="UP000000626">
    <property type="component" value="Chromosome"/>
</dbReference>
<dbReference type="GO" id="GO:0043590">
    <property type="term" value="C:bacterial nucleoid"/>
    <property type="evidence" value="ECO:0007669"/>
    <property type="project" value="UniProtKB-UniRule"/>
</dbReference>
<dbReference type="GO" id="GO:0005829">
    <property type="term" value="C:cytosol"/>
    <property type="evidence" value="ECO:0007669"/>
    <property type="project" value="TreeGrafter"/>
</dbReference>
<dbReference type="GO" id="GO:0003677">
    <property type="term" value="F:DNA binding"/>
    <property type="evidence" value="ECO:0007669"/>
    <property type="project" value="UniProtKB-UniRule"/>
</dbReference>
<dbReference type="FunFam" id="3.30.1310.10:FF:000007">
    <property type="entry name" value="Nucleoid-associated protein NMC1380"/>
    <property type="match status" value="1"/>
</dbReference>
<dbReference type="Gene3D" id="3.30.1310.10">
    <property type="entry name" value="Nucleoid-associated protein YbaB-like domain"/>
    <property type="match status" value="1"/>
</dbReference>
<dbReference type="HAMAP" id="MF_00274">
    <property type="entry name" value="DNA_YbaB_EbfC"/>
    <property type="match status" value="1"/>
</dbReference>
<dbReference type="InterPro" id="IPR036894">
    <property type="entry name" value="YbaB-like_sf"/>
</dbReference>
<dbReference type="InterPro" id="IPR004401">
    <property type="entry name" value="YbaB/EbfC"/>
</dbReference>
<dbReference type="NCBIfam" id="TIGR00103">
    <property type="entry name" value="DNA_YbaB_EbfC"/>
    <property type="match status" value="1"/>
</dbReference>
<dbReference type="PANTHER" id="PTHR33449">
    <property type="entry name" value="NUCLEOID-ASSOCIATED PROTEIN YBAB"/>
    <property type="match status" value="1"/>
</dbReference>
<dbReference type="PANTHER" id="PTHR33449:SF1">
    <property type="entry name" value="NUCLEOID-ASSOCIATED PROTEIN YBAB"/>
    <property type="match status" value="1"/>
</dbReference>
<dbReference type="Pfam" id="PF02575">
    <property type="entry name" value="YbaB_DNA_bd"/>
    <property type="match status" value="1"/>
</dbReference>
<dbReference type="PIRSF" id="PIRSF004555">
    <property type="entry name" value="UCP004555"/>
    <property type="match status" value="1"/>
</dbReference>
<dbReference type="SUPFAM" id="SSF82607">
    <property type="entry name" value="YbaB-like"/>
    <property type="match status" value="1"/>
</dbReference>
<gene>
    <name type="ordered locus">NMA1657</name>
</gene>
<keyword id="KW-0963">Cytoplasm</keyword>
<keyword id="KW-0238">DNA-binding</keyword>
<sequence>MFGKAGLGGLMKQAQQMQENMKKAQAKLAETEIEGEAGNGLVKITMTCAHEVRKIDISPDLIQEAADDKEMLEDLILAALKSARDKAEETANKTMGAFTQGLPPGVGDFFR</sequence>
<name>Y1657_NEIMA</name>
<evidence type="ECO:0000255" key="1">
    <source>
        <dbReference type="HAMAP-Rule" id="MF_00274"/>
    </source>
</evidence>
<feature type="chain" id="PRO_0000170414" description="Nucleoid-associated protein NMA1657">
    <location>
        <begin position="1"/>
        <end position="111"/>
    </location>
</feature>
<proteinExistence type="inferred from homology"/>
<reference key="1">
    <citation type="journal article" date="2000" name="Nature">
        <title>Complete DNA sequence of a serogroup A strain of Neisseria meningitidis Z2491.</title>
        <authorList>
            <person name="Parkhill J."/>
            <person name="Achtman M."/>
            <person name="James K.D."/>
            <person name="Bentley S.D."/>
            <person name="Churcher C.M."/>
            <person name="Klee S.R."/>
            <person name="Morelli G."/>
            <person name="Basham D."/>
            <person name="Brown D."/>
            <person name="Chillingworth T."/>
            <person name="Davies R.M."/>
            <person name="Davis P."/>
            <person name="Devlin K."/>
            <person name="Feltwell T."/>
            <person name="Hamlin N."/>
            <person name="Holroyd S."/>
            <person name="Jagels K."/>
            <person name="Leather S."/>
            <person name="Moule S."/>
            <person name="Mungall K.L."/>
            <person name="Quail M.A."/>
            <person name="Rajandream M.A."/>
            <person name="Rutherford K.M."/>
            <person name="Simmonds M."/>
            <person name="Skelton J."/>
            <person name="Whitehead S."/>
            <person name="Spratt B.G."/>
            <person name="Barrell B.G."/>
        </authorList>
    </citation>
    <scope>NUCLEOTIDE SEQUENCE [LARGE SCALE GENOMIC DNA]</scope>
    <source>
        <strain>DSM 15465 / Z2491</strain>
    </source>
</reference>